<dbReference type="EC" id="1.6.1.1" evidence="1"/>
<dbReference type="EMBL" id="AP009240">
    <property type="protein sequence ID" value="BAG79781.1"/>
    <property type="molecule type" value="Genomic_DNA"/>
</dbReference>
<dbReference type="RefSeq" id="WP_001120810.1">
    <property type="nucleotide sequence ID" value="NC_011415.1"/>
</dbReference>
<dbReference type="SMR" id="B6I5I0"/>
<dbReference type="GeneID" id="75203206"/>
<dbReference type="KEGG" id="ecy:ECSE_4257"/>
<dbReference type="HOGENOM" id="CLU_016755_0_0_6"/>
<dbReference type="Proteomes" id="UP000008199">
    <property type="component" value="Chromosome"/>
</dbReference>
<dbReference type="GO" id="GO:0005829">
    <property type="term" value="C:cytosol"/>
    <property type="evidence" value="ECO:0007669"/>
    <property type="project" value="TreeGrafter"/>
</dbReference>
<dbReference type="GO" id="GO:0004148">
    <property type="term" value="F:dihydrolipoyl dehydrogenase (NADH) activity"/>
    <property type="evidence" value="ECO:0007669"/>
    <property type="project" value="TreeGrafter"/>
</dbReference>
<dbReference type="GO" id="GO:0050660">
    <property type="term" value="F:flavin adenine dinucleotide binding"/>
    <property type="evidence" value="ECO:0007669"/>
    <property type="project" value="TreeGrafter"/>
</dbReference>
<dbReference type="GO" id="GO:0003957">
    <property type="term" value="F:NAD(P)+ transhydrogenase (Si-specific) activity"/>
    <property type="evidence" value="ECO:0007669"/>
    <property type="project" value="UniProtKB-UniRule"/>
</dbReference>
<dbReference type="GO" id="GO:0006103">
    <property type="term" value="P:2-oxoglutarate metabolic process"/>
    <property type="evidence" value="ECO:0007669"/>
    <property type="project" value="TreeGrafter"/>
</dbReference>
<dbReference type="GO" id="GO:0006739">
    <property type="term" value="P:NADP metabolic process"/>
    <property type="evidence" value="ECO:0007669"/>
    <property type="project" value="UniProtKB-UniRule"/>
</dbReference>
<dbReference type="FunFam" id="3.30.390.30:FF:000002">
    <property type="entry name" value="Soluble pyridine nucleotide transhydrogenase"/>
    <property type="match status" value="1"/>
</dbReference>
<dbReference type="FunFam" id="3.50.50.60:FF:000008">
    <property type="entry name" value="Soluble pyridine nucleotide transhydrogenase"/>
    <property type="match status" value="1"/>
</dbReference>
<dbReference type="Gene3D" id="3.30.390.30">
    <property type="match status" value="1"/>
</dbReference>
<dbReference type="Gene3D" id="3.50.50.60">
    <property type="entry name" value="FAD/NAD(P)-binding domain"/>
    <property type="match status" value="2"/>
</dbReference>
<dbReference type="HAMAP" id="MF_00247">
    <property type="entry name" value="SthA"/>
    <property type="match status" value="1"/>
</dbReference>
<dbReference type="InterPro" id="IPR050151">
    <property type="entry name" value="Class-I_Pyr_Nuc-Dis_Oxidored"/>
</dbReference>
<dbReference type="InterPro" id="IPR036188">
    <property type="entry name" value="FAD/NAD-bd_sf"/>
</dbReference>
<dbReference type="InterPro" id="IPR023753">
    <property type="entry name" value="FAD/NAD-binding_dom"/>
</dbReference>
<dbReference type="InterPro" id="IPR016156">
    <property type="entry name" value="FAD/NAD-linked_Rdtase_dimer_sf"/>
</dbReference>
<dbReference type="InterPro" id="IPR001100">
    <property type="entry name" value="Pyr_nuc-diS_OxRdtase"/>
</dbReference>
<dbReference type="InterPro" id="IPR004099">
    <property type="entry name" value="Pyr_nucl-diS_OxRdtase_dimer"/>
</dbReference>
<dbReference type="InterPro" id="IPR022962">
    <property type="entry name" value="STH_gammaproteobact"/>
</dbReference>
<dbReference type="NCBIfam" id="NF003585">
    <property type="entry name" value="PRK05249.1"/>
    <property type="match status" value="1"/>
</dbReference>
<dbReference type="PANTHER" id="PTHR22912">
    <property type="entry name" value="DISULFIDE OXIDOREDUCTASE"/>
    <property type="match status" value="1"/>
</dbReference>
<dbReference type="PANTHER" id="PTHR22912:SF93">
    <property type="entry name" value="SOLUBLE PYRIDINE NUCLEOTIDE TRANSHYDROGENASE"/>
    <property type="match status" value="1"/>
</dbReference>
<dbReference type="Pfam" id="PF07992">
    <property type="entry name" value="Pyr_redox_2"/>
    <property type="match status" value="1"/>
</dbReference>
<dbReference type="Pfam" id="PF02852">
    <property type="entry name" value="Pyr_redox_dim"/>
    <property type="match status" value="1"/>
</dbReference>
<dbReference type="PIRSF" id="PIRSF000350">
    <property type="entry name" value="Mercury_reductase_MerA"/>
    <property type="match status" value="1"/>
</dbReference>
<dbReference type="PRINTS" id="PR00368">
    <property type="entry name" value="FADPNR"/>
</dbReference>
<dbReference type="PRINTS" id="PR00411">
    <property type="entry name" value="PNDRDTASEI"/>
</dbReference>
<dbReference type="SUPFAM" id="SSF51905">
    <property type="entry name" value="FAD/NAD(P)-binding domain"/>
    <property type="match status" value="1"/>
</dbReference>
<dbReference type="SUPFAM" id="SSF55424">
    <property type="entry name" value="FAD/NAD-linked reductases, dimerisation (C-terminal) domain"/>
    <property type="match status" value="1"/>
</dbReference>
<comment type="function">
    <text evidence="1">Conversion of NADPH, generated by peripheral catabolic pathways, to NADH, which can enter the respiratory chain for energy generation.</text>
</comment>
<comment type="catalytic activity">
    <reaction evidence="1">
        <text>NAD(+) + NADPH = NADH + NADP(+)</text>
        <dbReference type="Rhea" id="RHEA:11692"/>
        <dbReference type="ChEBI" id="CHEBI:57540"/>
        <dbReference type="ChEBI" id="CHEBI:57783"/>
        <dbReference type="ChEBI" id="CHEBI:57945"/>
        <dbReference type="ChEBI" id="CHEBI:58349"/>
        <dbReference type="EC" id="1.6.1.1"/>
    </reaction>
</comment>
<comment type="cofactor">
    <cofactor evidence="1">
        <name>FAD</name>
        <dbReference type="ChEBI" id="CHEBI:57692"/>
    </cofactor>
    <text evidence="1">Binds 1 FAD per subunit.</text>
</comment>
<comment type="subcellular location">
    <subcellularLocation>
        <location evidence="1">Cytoplasm</location>
    </subcellularLocation>
</comment>
<comment type="similarity">
    <text evidence="1">Belongs to the class-I pyridine nucleotide-disulfide oxidoreductase family.</text>
</comment>
<reference key="1">
    <citation type="journal article" date="2008" name="DNA Res.">
        <title>Complete genome sequence and comparative analysis of the wild-type commensal Escherichia coli strain SE11 isolated from a healthy adult.</title>
        <authorList>
            <person name="Oshima K."/>
            <person name="Toh H."/>
            <person name="Ogura Y."/>
            <person name="Sasamoto H."/>
            <person name="Morita H."/>
            <person name="Park S.-H."/>
            <person name="Ooka T."/>
            <person name="Iyoda S."/>
            <person name="Taylor T.D."/>
            <person name="Hayashi T."/>
            <person name="Itoh K."/>
            <person name="Hattori M."/>
        </authorList>
    </citation>
    <scope>NUCLEOTIDE SEQUENCE [LARGE SCALE GENOMIC DNA]</scope>
    <source>
        <strain>SE11</strain>
    </source>
</reference>
<sequence length="466" mass="51560">MPHSYDYDAIVIGSGPGGEGAAMGLVKQGARVAVIERYQNVGGGCTHWGTIPSKALRHAVSRIIEFNQNPLYSDHSRLLRSSFADILNHADNVINQQTRMRQGFYERNHCEILQGNARFVDEHTLALDCPDGSVETLTAEKFVIACGSRPYHPTDVDFTHPRIYDSDSILSMHHEPRHVLIYGAGVIGCEYASIFRGMDVKVDLINTRDRLLAFLDQEMSDSLSYHFWNSGVVIRHNEEYEKIEGCDDGVIMHLKSGKKLKADCLLYANGRTGNTDSLALQNIGLETDSRGQLKVNSMYQTAQPHVYAVGDVIGYPSLASAAYDQGRIAAQALVKGEATAHLIEDIPTGIYTIPEISSVGKTEQQLTAMKVPYEVGRAQFKHLARAQIVGMNVGTLKILFHRETKEILGIHCFGERAAEIIHIGQAIMEQKGGGNTIEYFVNTTFNYPTMAEAYRVAALNGLNRLF</sequence>
<evidence type="ECO:0000255" key="1">
    <source>
        <dbReference type="HAMAP-Rule" id="MF_00247"/>
    </source>
</evidence>
<accession>B6I5I0</accession>
<name>STHA_ECOSE</name>
<organism>
    <name type="scientific">Escherichia coli (strain SE11)</name>
    <dbReference type="NCBI Taxonomy" id="409438"/>
    <lineage>
        <taxon>Bacteria</taxon>
        <taxon>Pseudomonadati</taxon>
        <taxon>Pseudomonadota</taxon>
        <taxon>Gammaproteobacteria</taxon>
        <taxon>Enterobacterales</taxon>
        <taxon>Enterobacteriaceae</taxon>
        <taxon>Escherichia</taxon>
    </lineage>
</organism>
<keyword id="KW-0963">Cytoplasm</keyword>
<keyword id="KW-0274">FAD</keyword>
<keyword id="KW-0285">Flavoprotein</keyword>
<keyword id="KW-0520">NAD</keyword>
<keyword id="KW-0521">NADP</keyword>
<keyword id="KW-0560">Oxidoreductase</keyword>
<proteinExistence type="inferred from homology"/>
<gene>
    <name evidence="1" type="primary">sthA</name>
    <name evidence="1" type="synonym">udhA</name>
    <name type="ordered locus">ECSE_4257</name>
</gene>
<feature type="chain" id="PRO_1000100854" description="Soluble pyridine nucleotide transhydrogenase">
    <location>
        <begin position="1"/>
        <end position="466"/>
    </location>
</feature>
<feature type="binding site" evidence="1">
    <location>
        <begin position="36"/>
        <end position="45"/>
    </location>
    <ligand>
        <name>FAD</name>
        <dbReference type="ChEBI" id="CHEBI:57692"/>
    </ligand>
</feature>
<protein>
    <recommendedName>
        <fullName evidence="1">Soluble pyridine nucleotide transhydrogenase</fullName>
        <shortName evidence="1">STH</shortName>
        <ecNumber evidence="1">1.6.1.1</ecNumber>
    </recommendedName>
    <alternativeName>
        <fullName evidence="1">NAD(P)(+) transhydrogenase [B-specific]</fullName>
    </alternativeName>
</protein>